<sequence>MTKRVALEPAFILHRRPYSNTSLILELLTPNHGRVCALARSARGLKSRYKGKLELFSPLLISWSGRSDLKFLGDVEANGMPYLLEGEALLCGFYLNELLIRLLHHDDPYLRLFHHYQNTLEKLVNGRLEATLRCFEKQLLDELGYGLPLSCDVEMKLPFKPDQFYQYLPDRGFLLCEKSEERDVFSGKSLLALQEESFSDESSLKEIKYLMRLTLNRLLGKKPLKTRELLF</sequence>
<organism>
    <name type="scientific">Coxiella burnetii (strain CbuG_Q212)</name>
    <name type="common">Coxiella burnetii (strain Q212)</name>
    <dbReference type="NCBI Taxonomy" id="434923"/>
    <lineage>
        <taxon>Bacteria</taxon>
        <taxon>Pseudomonadati</taxon>
        <taxon>Pseudomonadota</taxon>
        <taxon>Gammaproteobacteria</taxon>
        <taxon>Legionellales</taxon>
        <taxon>Coxiellaceae</taxon>
        <taxon>Coxiella</taxon>
    </lineage>
</organism>
<protein>
    <recommendedName>
        <fullName evidence="1">DNA repair protein RecO</fullName>
    </recommendedName>
    <alternativeName>
        <fullName evidence="1">Recombination protein O</fullName>
    </alternativeName>
</protein>
<dbReference type="EMBL" id="CP001019">
    <property type="protein sequence ID" value="ACJ17929.1"/>
    <property type="molecule type" value="Genomic_DNA"/>
</dbReference>
<dbReference type="RefSeq" id="WP_005772032.1">
    <property type="nucleotide sequence ID" value="NC_011527.1"/>
</dbReference>
<dbReference type="SMR" id="B6IZ01"/>
<dbReference type="KEGG" id="cbg:CbuG_0508"/>
<dbReference type="HOGENOM" id="CLU_066645_1_0_6"/>
<dbReference type="GO" id="GO:0043590">
    <property type="term" value="C:bacterial nucleoid"/>
    <property type="evidence" value="ECO:0007669"/>
    <property type="project" value="TreeGrafter"/>
</dbReference>
<dbReference type="GO" id="GO:0006310">
    <property type="term" value="P:DNA recombination"/>
    <property type="evidence" value="ECO:0007669"/>
    <property type="project" value="UniProtKB-UniRule"/>
</dbReference>
<dbReference type="GO" id="GO:0006302">
    <property type="term" value="P:double-strand break repair"/>
    <property type="evidence" value="ECO:0007669"/>
    <property type="project" value="TreeGrafter"/>
</dbReference>
<dbReference type="Gene3D" id="2.40.50.140">
    <property type="entry name" value="Nucleic acid-binding proteins"/>
    <property type="match status" value="1"/>
</dbReference>
<dbReference type="Gene3D" id="1.20.1440.120">
    <property type="entry name" value="Recombination protein O, C-terminal domain"/>
    <property type="match status" value="1"/>
</dbReference>
<dbReference type="HAMAP" id="MF_00201">
    <property type="entry name" value="RecO"/>
    <property type="match status" value="1"/>
</dbReference>
<dbReference type="InterPro" id="IPR037278">
    <property type="entry name" value="ARFGAP/RecO"/>
</dbReference>
<dbReference type="InterPro" id="IPR022572">
    <property type="entry name" value="DNA_rep/recomb_RecO_N"/>
</dbReference>
<dbReference type="InterPro" id="IPR012340">
    <property type="entry name" value="NA-bd_OB-fold"/>
</dbReference>
<dbReference type="InterPro" id="IPR003717">
    <property type="entry name" value="RecO"/>
</dbReference>
<dbReference type="InterPro" id="IPR042242">
    <property type="entry name" value="RecO_C"/>
</dbReference>
<dbReference type="NCBIfam" id="TIGR00613">
    <property type="entry name" value="reco"/>
    <property type="match status" value="1"/>
</dbReference>
<dbReference type="PANTHER" id="PTHR33991">
    <property type="entry name" value="DNA REPAIR PROTEIN RECO"/>
    <property type="match status" value="1"/>
</dbReference>
<dbReference type="PANTHER" id="PTHR33991:SF1">
    <property type="entry name" value="DNA REPAIR PROTEIN RECO"/>
    <property type="match status" value="1"/>
</dbReference>
<dbReference type="Pfam" id="PF02565">
    <property type="entry name" value="RecO_C"/>
    <property type="match status" value="1"/>
</dbReference>
<dbReference type="Pfam" id="PF11967">
    <property type="entry name" value="RecO_N"/>
    <property type="match status" value="1"/>
</dbReference>
<dbReference type="SUPFAM" id="SSF57863">
    <property type="entry name" value="ArfGap/RecO-like zinc finger"/>
    <property type="match status" value="1"/>
</dbReference>
<dbReference type="SUPFAM" id="SSF50249">
    <property type="entry name" value="Nucleic acid-binding proteins"/>
    <property type="match status" value="1"/>
</dbReference>
<gene>
    <name evidence="1" type="primary">recO</name>
    <name type="ordered locus">CbuG_0508</name>
</gene>
<reference key="1">
    <citation type="journal article" date="2009" name="Infect. Immun.">
        <title>Comparative genomics reveal extensive transposon-mediated genomic plasticity and diversity among potential effector proteins within the genus Coxiella.</title>
        <authorList>
            <person name="Beare P.A."/>
            <person name="Unsworth N."/>
            <person name="Andoh M."/>
            <person name="Voth D.E."/>
            <person name="Omsland A."/>
            <person name="Gilk S.D."/>
            <person name="Williams K.P."/>
            <person name="Sobral B.W."/>
            <person name="Kupko J.J. III"/>
            <person name="Porcella S.F."/>
            <person name="Samuel J.E."/>
            <person name="Heinzen R.A."/>
        </authorList>
    </citation>
    <scope>NUCLEOTIDE SEQUENCE [LARGE SCALE GENOMIC DNA]</scope>
    <source>
        <strain>CbuG_Q212</strain>
    </source>
</reference>
<comment type="function">
    <text evidence="1">Involved in DNA repair and RecF pathway recombination.</text>
</comment>
<comment type="similarity">
    <text evidence="1">Belongs to the RecO family.</text>
</comment>
<feature type="chain" id="PRO_1000099375" description="DNA repair protein RecO">
    <location>
        <begin position="1"/>
        <end position="231"/>
    </location>
</feature>
<keyword id="KW-0227">DNA damage</keyword>
<keyword id="KW-0233">DNA recombination</keyword>
<keyword id="KW-0234">DNA repair</keyword>
<name>RECO_COXB2</name>
<evidence type="ECO:0000255" key="1">
    <source>
        <dbReference type="HAMAP-Rule" id="MF_00201"/>
    </source>
</evidence>
<accession>B6IZ01</accession>
<proteinExistence type="inferred from homology"/>